<accession>A7X575</accession>
<name>LACC_STAA1</name>
<gene>
    <name evidence="1" type="primary">lacC</name>
    <name type="ordered locus">SAHV_2177</name>
</gene>
<feature type="chain" id="PRO_1000068935" description="Tagatose-6-phosphate kinase">
    <location>
        <begin position="1"/>
        <end position="310"/>
    </location>
</feature>
<protein>
    <recommendedName>
        <fullName evidence="1">Tagatose-6-phosphate kinase</fullName>
        <ecNumber evidence="1">2.7.1.144</ecNumber>
    </recommendedName>
    <alternativeName>
        <fullName evidence="1">Phosphotagatokinase</fullName>
    </alternativeName>
</protein>
<reference key="1">
    <citation type="journal article" date="2008" name="Antimicrob. Agents Chemother.">
        <title>Mutated response regulator graR is responsible for phenotypic conversion of Staphylococcus aureus from heterogeneous vancomycin-intermediate resistance to vancomycin-intermediate resistance.</title>
        <authorList>
            <person name="Neoh H.-M."/>
            <person name="Cui L."/>
            <person name="Yuzawa H."/>
            <person name="Takeuchi F."/>
            <person name="Matsuo M."/>
            <person name="Hiramatsu K."/>
        </authorList>
    </citation>
    <scope>NUCLEOTIDE SEQUENCE [LARGE SCALE GENOMIC DNA]</scope>
    <source>
        <strain>Mu3 / ATCC 700698</strain>
    </source>
</reference>
<keyword id="KW-0067">ATP-binding</keyword>
<keyword id="KW-0418">Kinase</keyword>
<keyword id="KW-0423">Lactose metabolism</keyword>
<keyword id="KW-0547">Nucleotide-binding</keyword>
<keyword id="KW-0808">Transferase</keyword>
<evidence type="ECO:0000255" key="1">
    <source>
        <dbReference type="HAMAP-Rule" id="MF_01557"/>
    </source>
</evidence>
<dbReference type="EC" id="2.7.1.144" evidence="1"/>
<dbReference type="EMBL" id="AP009324">
    <property type="protein sequence ID" value="BAF79060.1"/>
    <property type="molecule type" value="Genomic_DNA"/>
</dbReference>
<dbReference type="RefSeq" id="WP_000604134.1">
    <property type="nucleotide sequence ID" value="NC_009782.1"/>
</dbReference>
<dbReference type="SMR" id="A7X575"/>
<dbReference type="KEGG" id="saw:SAHV_2177"/>
<dbReference type="HOGENOM" id="CLU_050013_5_0_9"/>
<dbReference type="UniPathway" id="UPA00704">
    <property type="reaction ID" value="UER00715"/>
</dbReference>
<dbReference type="GO" id="GO:0005829">
    <property type="term" value="C:cytosol"/>
    <property type="evidence" value="ECO:0007669"/>
    <property type="project" value="TreeGrafter"/>
</dbReference>
<dbReference type="GO" id="GO:0005524">
    <property type="term" value="F:ATP binding"/>
    <property type="evidence" value="ECO:0007669"/>
    <property type="project" value="UniProtKB-KW"/>
</dbReference>
<dbReference type="GO" id="GO:0008443">
    <property type="term" value="F:phosphofructokinase activity"/>
    <property type="evidence" value="ECO:0007669"/>
    <property type="project" value="TreeGrafter"/>
</dbReference>
<dbReference type="GO" id="GO:0009024">
    <property type="term" value="F:tagatose-6-phosphate kinase activity"/>
    <property type="evidence" value="ECO:0007669"/>
    <property type="project" value="UniProtKB-UniRule"/>
</dbReference>
<dbReference type="GO" id="GO:2001059">
    <property type="term" value="P:D-tagatose 6-phosphate catabolic process"/>
    <property type="evidence" value="ECO:0007669"/>
    <property type="project" value="UniProtKB-UniRule"/>
</dbReference>
<dbReference type="GO" id="GO:0019512">
    <property type="term" value="P:lactose catabolic process via tagatose-6-phosphate"/>
    <property type="evidence" value="ECO:0007669"/>
    <property type="project" value="InterPro"/>
</dbReference>
<dbReference type="CDD" id="cd01164">
    <property type="entry name" value="FruK_PfkB_like"/>
    <property type="match status" value="1"/>
</dbReference>
<dbReference type="FunFam" id="3.40.1190.20:FF:000001">
    <property type="entry name" value="Phosphofructokinase"/>
    <property type="match status" value="1"/>
</dbReference>
<dbReference type="Gene3D" id="3.40.1190.20">
    <property type="match status" value="1"/>
</dbReference>
<dbReference type="HAMAP" id="MF_01557">
    <property type="entry name" value="LacC"/>
    <property type="match status" value="1"/>
</dbReference>
<dbReference type="InterPro" id="IPR002173">
    <property type="entry name" value="Carboh/pur_kinase_PfkB_CS"/>
</dbReference>
<dbReference type="InterPro" id="IPR005926">
    <property type="entry name" value="LacC"/>
</dbReference>
<dbReference type="InterPro" id="IPR011611">
    <property type="entry name" value="PfkB_dom"/>
</dbReference>
<dbReference type="InterPro" id="IPR029056">
    <property type="entry name" value="Ribokinase-like"/>
</dbReference>
<dbReference type="InterPro" id="IPR017583">
    <property type="entry name" value="Tagatose/fructose_Pkinase"/>
</dbReference>
<dbReference type="NCBIfam" id="TIGR03168">
    <property type="entry name" value="1-PFK"/>
    <property type="match status" value="1"/>
</dbReference>
<dbReference type="NCBIfam" id="TIGR01231">
    <property type="entry name" value="lacC"/>
    <property type="match status" value="1"/>
</dbReference>
<dbReference type="NCBIfam" id="NF010033">
    <property type="entry name" value="PRK13508.1"/>
    <property type="match status" value="1"/>
</dbReference>
<dbReference type="PANTHER" id="PTHR46566:SF5">
    <property type="entry name" value="1-PHOSPHOFRUCTOKINASE"/>
    <property type="match status" value="1"/>
</dbReference>
<dbReference type="PANTHER" id="PTHR46566">
    <property type="entry name" value="1-PHOSPHOFRUCTOKINASE-RELATED"/>
    <property type="match status" value="1"/>
</dbReference>
<dbReference type="Pfam" id="PF00294">
    <property type="entry name" value="PfkB"/>
    <property type="match status" value="1"/>
</dbReference>
<dbReference type="PIRSF" id="PIRSF000535">
    <property type="entry name" value="1PFK/6PFK/LacC"/>
    <property type="match status" value="1"/>
</dbReference>
<dbReference type="SUPFAM" id="SSF53613">
    <property type="entry name" value="Ribokinase-like"/>
    <property type="match status" value="1"/>
</dbReference>
<dbReference type="PROSITE" id="PS00583">
    <property type="entry name" value="PFKB_KINASES_1"/>
    <property type="match status" value="1"/>
</dbReference>
<dbReference type="PROSITE" id="PS00584">
    <property type="entry name" value="PFKB_KINASES_2"/>
    <property type="match status" value="1"/>
</dbReference>
<proteinExistence type="inferred from homology"/>
<comment type="catalytic activity">
    <reaction evidence="1">
        <text>D-tagatofuranose 6-phosphate + ATP = D-tagatofuranose 1,6-bisphosphate + ADP + H(+)</text>
        <dbReference type="Rhea" id="RHEA:12420"/>
        <dbReference type="ChEBI" id="CHEBI:15378"/>
        <dbReference type="ChEBI" id="CHEBI:30616"/>
        <dbReference type="ChEBI" id="CHEBI:58694"/>
        <dbReference type="ChEBI" id="CHEBI:58695"/>
        <dbReference type="ChEBI" id="CHEBI:456216"/>
        <dbReference type="EC" id="2.7.1.144"/>
    </reaction>
</comment>
<comment type="pathway">
    <text evidence="1">Carbohydrate metabolism; D-tagatose 6-phosphate degradation; D-glyceraldehyde 3-phosphate and glycerone phosphate from D-tagatose 6-phosphate: step 1/2.</text>
</comment>
<comment type="similarity">
    <text evidence="1">Belongs to the carbohydrate kinase PfkB family. LacC subfamily.</text>
</comment>
<organism>
    <name type="scientific">Staphylococcus aureus (strain Mu3 / ATCC 700698)</name>
    <dbReference type="NCBI Taxonomy" id="418127"/>
    <lineage>
        <taxon>Bacteria</taxon>
        <taxon>Bacillati</taxon>
        <taxon>Bacillota</taxon>
        <taxon>Bacilli</taxon>
        <taxon>Bacillales</taxon>
        <taxon>Staphylococcaceae</taxon>
        <taxon>Staphylococcus</taxon>
    </lineage>
</organism>
<sequence length="310" mass="33895">MILTLTLNPSVDISYPLTALKLDDVNRVQEVSKTAGGKGLNVTRVLAQVGEPVLASGFIGGELGQFIAKKLDHADIKHAFYNIKGETRNCIAILHEGQQTEILEQGPEIDNQEAAGFIKHFEQLLEKVEAVAISGSLPKGLNQDYYAQIIERCQNKGVPVILDCSGATLQTVLENPYKPTVIKPNISELYQLLNQPLDESLESLKQAVSQPLFEGIEWIIVSLGAQGAFAKHNHTFYRVNIPTINVLNPVGSGDSTVAGITSAILNHENDHDLLKKANTLGMLNAQEAQTGYVNLNNYDELFNQIEVLEV</sequence>